<keyword id="KW-0130">Cell adhesion</keyword>
<keyword id="KW-0968">Cytoplasmic vesicle</keyword>
<keyword id="KW-1015">Disulfide bond</keyword>
<keyword id="KW-0245">EGF-like domain</keyword>
<keyword id="KW-0256">Endoplasmic reticulum</keyword>
<keyword id="KW-0325">Glycoprotein</keyword>
<keyword id="KW-0333">Golgi apparatus</keyword>
<keyword id="KW-1185">Reference proteome</keyword>
<keyword id="KW-0964">Secreted</keyword>
<keyword id="KW-0732">Signal</keyword>
<sequence length="383" mass="40528">MRGGTSALLHALTFSGAVWMCTPAEALPIQKSVQLGSFDKVVPSREVVSESLAPSFAVTETHSSVQSPSKQETQLCAISSEGKPCRNRQLHTDNGYFIGASCPKSACCSKTMCGPGGCGEFCSSNWIFCSSSLIYHPDKSYGGDCSCEKQGHRCDKNAECVENLDAGGGVHCKCKDGFVGTGLTCSEDPCSKRGNAKCGPNGTCIVVDSVSYTCTCGDGETLVNLPEGGQGCKRTGCHAFRENCSPGRCIDDASHENGYTCECPTGYSREVTSKAEESCVEGVEVTLAEKCEKEFGISASSCKCDNGYSGSASATSHHGKGESGSEGSLSEKMNIVFKCPSGYHPRYHAHTVTCEKIKHFALDGAGNHDTTTYVARRRYPASL</sequence>
<organism evidence="18">
    <name type="scientific">Toxoplasma gondii</name>
    <dbReference type="NCBI Taxonomy" id="5811"/>
    <lineage>
        <taxon>Eukaryota</taxon>
        <taxon>Sar</taxon>
        <taxon>Alveolata</taxon>
        <taxon>Apicomplexa</taxon>
        <taxon>Conoidasida</taxon>
        <taxon>Coccidia</taxon>
        <taxon>Eucoccidiorida</taxon>
        <taxon>Eimeriorina</taxon>
        <taxon>Sarcocystidae</taxon>
        <taxon>Toxoplasma</taxon>
    </lineage>
</organism>
<comment type="function">
    <text evidence="4 5 8 9 10">Adhesin; can bind both the host cells and the parasites (PubMed:11207591, PubMed:12032066). May be involved in parasite invasion by acting as a bridge between the parasite and the host cell (PubMed:11207591). Triggers innate immune responses in mouse macrophages via the TLR11/MyD88/NF-kappa-B pathway (PubMed:36730424). Induces TNF/TNF-alpha secretion in mouse macrophages (PubMed:28000706, PubMed:36730424). Induces secretion of IL6 in mouse and human macrophages likely via different mechanisms (PubMed:36730424). Up-regulates expression of NOS2/iNOS in mouse macrophages (PubMed:36730424). Induces mouse macrophage polarization (PubMed:28000706).</text>
</comment>
<comment type="subunit">
    <text evidence="5 6 16">Homodimer; dimerization is likely required for host cell binding but not for trafficking to micronemes.</text>
</comment>
<comment type="subcellular location">
    <subcellularLocation>
        <location evidence="6 7">Cytoplasmic vesicle</location>
        <location evidence="6 7">Secretory vesicle</location>
        <location evidence="6 7">Microneme</location>
    </subcellularLocation>
    <subcellularLocation>
        <location evidence="4">Secreted</location>
    </subcellularLocation>
    <subcellularLocation>
        <location evidence="6">Golgi apparatus</location>
    </subcellularLocation>
    <subcellularLocation>
        <location evidence="12">Endoplasmic reticulum</location>
    </subcellularLocation>
    <text evidence="6">In dividing and recently replicated parasites, MIC3 is not immediately targeted to micronemes but is retained into the secretory pathway.</text>
</comment>
<comment type="developmental stage">
    <text evidence="4 7">Expressed in tachyzoites (at protein level) (PubMed:11207591, PubMed:1944419). Expressed in bradyzoites (at protein level) (PubMed:1944419).</text>
</comment>
<comment type="PTM">
    <text evidence="6 7">Removal of the propeptide occurs in a post-medial-Golgi compartment (PubMed:18390648). Removal of the propeptide is required for the host cell binding (PubMed:1944419). The presence of propeptide does not affect dimerization (PubMed:18390648, PubMed:1944419). The presence of propeptide does not affect sorting to micronemes (PubMed:18390648).</text>
</comment>
<feature type="signal peptide" evidence="1">
    <location>
        <begin position="1"/>
        <end position="26"/>
    </location>
</feature>
<feature type="propeptide" id="PRO_0000462207" description="Required for proper sorting to micronemes" evidence="6 7">
    <location>
        <begin position="27"/>
        <end position="66"/>
    </location>
</feature>
<feature type="chain" id="PRO_5029747747" description="Micronemal protein 3" evidence="15">
    <location>
        <begin position="67"/>
        <end position="383"/>
    </location>
</feature>
<feature type="domain" description="EGF-like" evidence="2">
    <location>
        <begin position="186"/>
        <end position="227"/>
    </location>
</feature>
<feature type="region of interest" description="Lectin-like; required for the binding of host cells" evidence="5">
    <location>
        <begin position="67"/>
        <end position="145"/>
    </location>
</feature>
<feature type="region of interest" description="Required for proper sorting to micronemes" evidence="6">
    <location>
        <begin position="146"/>
        <end position="189"/>
    </location>
</feature>
<feature type="region of interest" description="Required for proper sorting to micronemes" evidence="6">
    <location>
        <begin position="190"/>
        <end position="236"/>
    </location>
</feature>
<feature type="region of interest" description="Required for proper sorting to micronemes" evidence="6">
    <location>
        <begin position="237"/>
        <end position="290"/>
    </location>
</feature>
<feature type="region of interest" description="Involved in dimerization" evidence="5">
    <location>
        <begin position="294"/>
        <end position="359"/>
    </location>
</feature>
<feature type="glycosylation site" description="N-linked (GlcNAc...) asparagine" evidence="3">
    <location>
        <position position="201"/>
    </location>
</feature>
<feature type="disulfide bond" evidence="2">
    <location>
        <begin position="190"/>
        <end position="204"/>
    </location>
</feature>
<feature type="disulfide bond" evidence="2">
    <location>
        <begin position="198"/>
        <end position="214"/>
    </location>
</feature>
<feature type="mutagenesis site" description="Does not affect dimerization." evidence="5">
    <original>C</original>
    <variation>G</variation>
    <location>
        <position position="302"/>
    </location>
</feature>
<feature type="mutagenesis site" description="Does not affect dimerization." evidence="5">
    <original>C</original>
    <variation>G</variation>
    <location>
        <position position="304"/>
    </location>
</feature>
<feature type="mutagenesis site" description="Does not affect dimerization." evidence="5">
    <original>C</original>
    <variation>G</variation>
    <location>
        <position position="339"/>
    </location>
</feature>
<feature type="mutagenesis site" description="Does not affect dimerization." evidence="5">
    <original>C</original>
    <variation>G</variation>
    <location>
        <position position="354"/>
    </location>
</feature>
<name>MIC3_TOXGO</name>
<dbReference type="EMBL" id="JAAUHK010000189">
    <property type="protein sequence ID" value="KAF4644940.1"/>
    <property type="molecule type" value="Genomic_DNA"/>
</dbReference>
<dbReference type="VEuPathDB" id="ToxoDB:TGME49_319560"/>
<dbReference type="Proteomes" id="UP000557509">
    <property type="component" value="Unassembled WGS sequence"/>
</dbReference>
<dbReference type="Gene3D" id="2.10.25.10">
    <property type="entry name" value="Laminin"/>
    <property type="match status" value="1"/>
</dbReference>
<dbReference type="Gene3D" id="2.90.20.10">
    <property type="entry name" value="Plasmodium vivax P25 domain"/>
    <property type="match status" value="1"/>
</dbReference>
<dbReference type="InterPro" id="IPR000742">
    <property type="entry name" value="EGF-like_dom"/>
</dbReference>
<dbReference type="InterPro" id="IPR024731">
    <property type="entry name" value="EGF_dom"/>
</dbReference>
<dbReference type="Pfam" id="PF12947">
    <property type="entry name" value="EGF_3"/>
    <property type="match status" value="1"/>
</dbReference>
<dbReference type="SMART" id="SM00181">
    <property type="entry name" value="EGF"/>
    <property type="match status" value="3"/>
</dbReference>
<dbReference type="PROSITE" id="PS50026">
    <property type="entry name" value="EGF_3"/>
    <property type="match status" value="1"/>
</dbReference>
<gene>
    <name evidence="10 11 12 13 14" type="primary">MIC3</name>
    <name evidence="17" type="ORF">TGRH88_007550</name>
</gene>
<proteinExistence type="evidence at protein level"/>
<evidence type="ECO:0000255" key="1"/>
<evidence type="ECO:0000255" key="2">
    <source>
        <dbReference type="PROSITE-ProRule" id="PRU00076"/>
    </source>
</evidence>
<evidence type="ECO:0000255" key="3">
    <source>
        <dbReference type="PROSITE-ProRule" id="PRU00498"/>
    </source>
</evidence>
<evidence type="ECO:0000269" key="4">
    <source>
    </source>
</evidence>
<evidence type="ECO:0000269" key="5">
    <source>
    </source>
</evidence>
<evidence type="ECO:0000269" key="6">
    <source>
    </source>
</evidence>
<evidence type="ECO:0000269" key="7">
    <source>
    </source>
</evidence>
<evidence type="ECO:0000269" key="8">
    <source>
    </source>
</evidence>
<evidence type="ECO:0000269" key="9">
    <source>
    </source>
</evidence>
<evidence type="ECO:0000303" key="10">
    <source>
    </source>
</evidence>
<evidence type="ECO:0000303" key="11">
    <source>
    </source>
</evidence>
<evidence type="ECO:0000303" key="12">
    <source>
    </source>
</evidence>
<evidence type="ECO:0000303" key="13">
    <source>
    </source>
</evidence>
<evidence type="ECO:0000303" key="14">
    <source>
    </source>
</evidence>
<evidence type="ECO:0000305" key="15"/>
<evidence type="ECO:0000305" key="16">
    <source>
    </source>
</evidence>
<evidence type="ECO:0000312" key="17">
    <source>
        <dbReference type="EMBL" id="KAF4644940.1"/>
    </source>
</evidence>
<evidence type="ECO:0000312" key="18">
    <source>
        <dbReference type="Proteomes" id="UP000557509"/>
    </source>
</evidence>
<reference evidence="18" key="1">
    <citation type="submission" date="2020-03" db="EMBL/GenBank/DDBJ databases">
        <title>Genome sequence of Toxoplasma gondii RH-88 strain.</title>
        <authorList>
            <person name="Lorenzi H.A."/>
            <person name="Venepally P."/>
            <person name="Rozenberg A."/>
            <person name="Sibley D."/>
        </authorList>
    </citation>
    <scope>NUCLEOTIDE SEQUENCE [LARGE SCALE GENOMIC DNA]</scope>
    <source>
        <strain evidence="18">RH-88</strain>
    </source>
</reference>
<reference evidence="15" key="2">
    <citation type="journal article" date="1991" name="Mol. Biochem. Parasitol.">
        <title>Characterization of microneme proteins of Toxoplasma gondii.</title>
        <authorList>
            <person name="Achbarou A."/>
            <person name="Mercereau-Puijalon O."/>
            <person name="Autheman J.M."/>
            <person name="Fortier B."/>
            <person name="Camus D."/>
            <person name="Dubremetz J.F."/>
        </authorList>
    </citation>
    <scope>SUBUNIT</scope>
    <scope>SUBCELLULAR LOCATION</scope>
    <scope>DEVELOPMENTAL STAGE</scope>
    <scope>PROCESSING</scope>
</reference>
<reference evidence="15" key="3">
    <citation type="journal article" date="2000" name="Cell. Microbiol.">
        <title>The microneme protein MIC3 of Toxoplasma gondii is a secretory adhesin that binds to both the surface of the host cells and the surface of the parasite.</title>
        <authorList>
            <person name="Garcia-Reguet N."/>
            <person name="Lebrun M."/>
            <person name="Fourmaux M.N."/>
            <person name="Mercereau-Puijalon O."/>
            <person name="Mann T."/>
            <person name="Beckers C.J."/>
            <person name="Samyn B."/>
            <person name="Van Beeumen J."/>
            <person name="Bout D."/>
            <person name="Dubremetz J.F."/>
        </authorList>
    </citation>
    <scope>FUNCTION</scope>
    <scope>SUBCELLULAR LOCATION</scope>
    <scope>DEVELOPMENTAL STAGE</scope>
    <scope>PROPEPTIDE</scope>
    <source>
        <strain evidence="10">RH</strain>
    </source>
</reference>
<reference evidence="15" key="4">
    <citation type="journal article" date="2002" name="EMBO J.">
        <title>The Toxoplasma gondii protein MIC3 requires pro-peptide cleavage and dimerization to function as adhesin.</title>
        <authorList>
            <person name="Cerede O."/>
            <person name="Dubremetz J.F."/>
            <person name="Bout D."/>
            <person name="Lebrun M."/>
        </authorList>
    </citation>
    <scope>FUNCTION</scope>
    <scope>SUBUNIT</scope>
    <scope>LECTIN-LIKE REGION</scope>
    <scope>DIMERIZATION REGION</scope>
    <scope>MUTAGENESIS OF CYS-302; CYS-304; CYS-339 AND CYS-354</scope>
    <source>
        <strain evidence="11">RH</strain>
    </source>
</reference>
<reference evidence="15" key="5">
    <citation type="journal article" date="2008" name="Eukaryot. Cell">
        <title>Molecular signals in the trafficking of Toxoplasma gondii protein MIC3 to the micronemes.</title>
        <authorList>
            <person name="El Hajj H."/>
            <person name="Papoin J."/>
            <person name="Cerede O."/>
            <person name="Garcia-Reguet N."/>
            <person name="Soete M."/>
            <person name="Dubremetz J.F."/>
            <person name="Lebrun M."/>
        </authorList>
    </citation>
    <scope>SUBUNIT</scope>
    <scope>SUBCELLULAR LOCATION</scope>
    <scope>PROCESSING</scope>
    <scope>PROPEPTIDE</scope>
    <scope>FUNCTIONAL REGIONS</scope>
    <source>
        <strain evidence="12">RH</strain>
    </source>
</reference>
<reference evidence="15" key="6">
    <citation type="journal article" date="2016" name="Sci. Rep.">
        <title>Identification of a TNF-alpha inducer MIC3 originating from the microneme of non-cystogenic, virulent Toxoplasma gondii.</title>
        <authorList>
            <person name="Qiu J."/>
            <person name="Wang L."/>
            <person name="Zhang R."/>
            <person name="Ge K."/>
            <person name="Guo H."/>
            <person name="Liu X."/>
            <person name="Liu J."/>
            <person name="Kong D."/>
            <person name="Wang Y."/>
        </authorList>
    </citation>
    <scope>IDENTIFICATION BY MASS SPECTROMETRY</scope>
    <scope>FUNCTION</scope>
</reference>
<reference evidence="15" key="7">
    <citation type="journal article" date="2023" name="PLoS Negl. Trop. Dis.">
        <title>Toxoplasma gondii microneme protein MIC3 induces macrophage TNF-alpha production and Ly6C expression via TLR11/MyD88 pathway.</title>
        <authorList>
            <person name="Qiu J."/>
            <person name="Xie Y."/>
            <person name="Shao C."/>
            <person name="Shao T."/>
            <person name="Qin M."/>
            <person name="Zhang R."/>
            <person name="Liu X."/>
            <person name="Xu Z."/>
            <person name="Wang Y."/>
        </authorList>
    </citation>
    <scope>FUNCTION</scope>
</reference>
<protein>
    <recommendedName>
        <fullName evidence="15">Micronemal protein 3</fullName>
    </recommendedName>
</protein>
<accession>A0A7J6KDB0</accession>